<comment type="catalytic activity">
    <reaction evidence="1">
        <text>(S)-4-amino-5-oxopentanoate = 5-aminolevulinate</text>
        <dbReference type="Rhea" id="RHEA:14265"/>
        <dbReference type="ChEBI" id="CHEBI:57501"/>
        <dbReference type="ChEBI" id="CHEBI:356416"/>
        <dbReference type="EC" id="5.4.3.8"/>
    </reaction>
</comment>
<comment type="cofactor">
    <cofactor evidence="1">
        <name>pyridoxal 5'-phosphate</name>
        <dbReference type="ChEBI" id="CHEBI:597326"/>
    </cofactor>
</comment>
<comment type="pathway">
    <text evidence="1">Porphyrin-containing compound metabolism; protoporphyrin-IX biosynthesis; 5-aminolevulinate from L-glutamyl-tRNA(Glu): step 2/2.</text>
</comment>
<comment type="subunit">
    <text evidence="1">Homodimer.</text>
</comment>
<comment type="subcellular location">
    <subcellularLocation>
        <location evidence="1">Cytoplasm</location>
    </subcellularLocation>
</comment>
<comment type="similarity">
    <text evidence="1">Belongs to the class-III pyridoxal-phosphate-dependent aminotransferase family. HemL subfamily.</text>
</comment>
<keyword id="KW-0963">Cytoplasm</keyword>
<keyword id="KW-0413">Isomerase</keyword>
<keyword id="KW-0627">Porphyrin biosynthesis</keyword>
<keyword id="KW-0663">Pyridoxal phosphate</keyword>
<evidence type="ECO:0000255" key="1">
    <source>
        <dbReference type="HAMAP-Rule" id="MF_00375"/>
    </source>
</evidence>
<protein>
    <recommendedName>
        <fullName evidence="1">Glutamate-1-semialdehyde 2,1-aminomutase 2</fullName>
        <shortName evidence="1">GSA 2</shortName>
        <ecNumber evidence="1">5.4.3.8</ecNumber>
    </recommendedName>
    <alternativeName>
        <fullName evidence="1">Glutamate-1-semialdehyde aminotransferase 2</fullName>
        <shortName evidence="1">GSA-AT 2</shortName>
    </alternativeName>
</protein>
<gene>
    <name evidence="1" type="primary">hemL2</name>
    <name type="ordered locus">Lm4b_01699</name>
</gene>
<accession>C1KVY4</accession>
<organism>
    <name type="scientific">Listeria monocytogenes serotype 4b (strain CLIP80459)</name>
    <dbReference type="NCBI Taxonomy" id="568819"/>
    <lineage>
        <taxon>Bacteria</taxon>
        <taxon>Bacillati</taxon>
        <taxon>Bacillota</taxon>
        <taxon>Bacilli</taxon>
        <taxon>Bacillales</taxon>
        <taxon>Listeriaceae</taxon>
        <taxon>Listeria</taxon>
    </lineage>
</organism>
<name>GSA2_LISMC</name>
<proteinExistence type="inferred from homology"/>
<reference key="1">
    <citation type="journal article" date="2012" name="BMC Genomics">
        <title>Comparative genomics and transcriptomics of lineages I, II, and III strains of Listeria monocytogenes.</title>
        <authorList>
            <person name="Hain T."/>
            <person name="Ghai R."/>
            <person name="Billion A."/>
            <person name="Kuenne C.T."/>
            <person name="Steinweg C."/>
            <person name="Izar B."/>
            <person name="Mohamed W."/>
            <person name="Mraheil M."/>
            <person name="Domann E."/>
            <person name="Schaffrath S."/>
            <person name="Karst U."/>
            <person name="Goesmann A."/>
            <person name="Oehm S."/>
            <person name="Puhler A."/>
            <person name="Merkl R."/>
            <person name="Vorwerk S."/>
            <person name="Glaser P."/>
            <person name="Garrido P."/>
            <person name="Rusniok C."/>
            <person name="Buchrieser C."/>
            <person name="Goebel W."/>
            <person name="Chakraborty T."/>
        </authorList>
    </citation>
    <scope>NUCLEOTIDE SEQUENCE [LARGE SCALE GENOMIC DNA]</scope>
    <source>
        <strain>CLIP80459</strain>
    </source>
</reference>
<feature type="chain" id="PRO_0000382335" description="Glutamate-1-semialdehyde 2,1-aminomutase 2">
    <location>
        <begin position="1"/>
        <end position="432"/>
    </location>
</feature>
<feature type="modified residue" description="N6-(pyridoxal phosphate)lysine" evidence="1">
    <location>
        <position position="268"/>
    </location>
</feature>
<dbReference type="EC" id="5.4.3.8" evidence="1"/>
<dbReference type="EMBL" id="FM242711">
    <property type="protein sequence ID" value="CAS05459.1"/>
    <property type="molecule type" value="Genomic_DNA"/>
</dbReference>
<dbReference type="RefSeq" id="WP_003726276.1">
    <property type="nucleotide sequence ID" value="NC_012488.1"/>
</dbReference>
<dbReference type="SMR" id="C1KVY4"/>
<dbReference type="KEGG" id="lmc:Lm4b_01699"/>
<dbReference type="HOGENOM" id="CLU_016922_1_5_9"/>
<dbReference type="UniPathway" id="UPA00251">
    <property type="reaction ID" value="UER00317"/>
</dbReference>
<dbReference type="GO" id="GO:0005737">
    <property type="term" value="C:cytoplasm"/>
    <property type="evidence" value="ECO:0007669"/>
    <property type="project" value="UniProtKB-SubCell"/>
</dbReference>
<dbReference type="GO" id="GO:0042286">
    <property type="term" value="F:glutamate-1-semialdehyde 2,1-aminomutase activity"/>
    <property type="evidence" value="ECO:0007669"/>
    <property type="project" value="UniProtKB-UniRule"/>
</dbReference>
<dbReference type="GO" id="GO:0030170">
    <property type="term" value="F:pyridoxal phosphate binding"/>
    <property type="evidence" value="ECO:0007669"/>
    <property type="project" value="InterPro"/>
</dbReference>
<dbReference type="GO" id="GO:0008483">
    <property type="term" value="F:transaminase activity"/>
    <property type="evidence" value="ECO:0007669"/>
    <property type="project" value="InterPro"/>
</dbReference>
<dbReference type="GO" id="GO:0006782">
    <property type="term" value="P:protoporphyrinogen IX biosynthetic process"/>
    <property type="evidence" value="ECO:0007669"/>
    <property type="project" value="UniProtKB-UniRule"/>
</dbReference>
<dbReference type="CDD" id="cd00610">
    <property type="entry name" value="OAT_like"/>
    <property type="match status" value="1"/>
</dbReference>
<dbReference type="FunFam" id="3.40.640.10:FF:000021">
    <property type="entry name" value="Glutamate-1-semialdehyde 2,1-aminomutase"/>
    <property type="match status" value="1"/>
</dbReference>
<dbReference type="Gene3D" id="3.90.1150.10">
    <property type="entry name" value="Aspartate Aminotransferase, domain 1"/>
    <property type="match status" value="1"/>
</dbReference>
<dbReference type="Gene3D" id="3.40.640.10">
    <property type="entry name" value="Type I PLP-dependent aspartate aminotransferase-like (Major domain)"/>
    <property type="match status" value="1"/>
</dbReference>
<dbReference type="HAMAP" id="MF_00375">
    <property type="entry name" value="HemL_aminotrans_3"/>
    <property type="match status" value="1"/>
</dbReference>
<dbReference type="InterPro" id="IPR004639">
    <property type="entry name" value="4pyrrol_synth_GluAld_NH2Trfase"/>
</dbReference>
<dbReference type="InterPro" id="IPR005814">
    <property type="entry name" value="Aminotrans_3"/>
</dbReference>
<dbReference type="InterPro" id="IPR049704">
    <property type="entry name" value="Aminotrans_3_PPA_site"/>
</dbReference>
<dbReference type="InterPro" id="IPR015424">
    <property type="entry name" value="PyrdxlP-dep_Trfase"/>
</dbReference>
<dbReference type="InterPro" id="IPR015421">
    <property type="entry name" value="PyrdxlP-dep_Trfase_major"/>
</dbReference>
<dbReference type="InterPro" id="IPR015422">
    <property type="entry name" value="PyrdxlP-dep_Trfase_small"/>
</dbReference>
<dbReference type="NCBIfam" id="TIGR00713">
    <property type="entry name" value="hemL"/>
    <property type="match status" value="1"/>
</dbReference>
<dbReference type="NCBIfam" id="NF000818">
    <property type="entry name" value="PRK00062.1"/>
    <property type="match status" value="1"/>
</dbReference>
<dbReference type="NCBIfam" id="NF009055">
    <property type="entry name" value="PRK12389.1"/>
    <property type="match status" value="1"/>
</dbReference>
<dbReference type="PANTHER" id="PTHR43713">
    <property type="entry name" value="GLUTAMATE-1-SEMIALDEHYDE 2,1-AMINOMUTASE"/>
    <property type="match status" value="1"/>
</dbReference>
<dbReference type="PANTHER" id="PTHR43713:SF1">
    <property type="entry name" value="GLUTAMATE-1-SEMIALDEHYDE 2,1-AMINOMUTASE 2"/>
    <property type="match status" value="1"/>
</dbReference>
<dbReference type="Pfam" id="PF00202">
    <property type="entry name" value="Aminotran_3"/>
    <property type="match status" value="1"/>
</dbReference>
<dbReference type="SUPFAM" id="SSF53383">
    <property type="entry name" value="PLP-dependent transferases"/>
    <property type="match status" value="1"/>
</dbReference>
<dbReference type="PROSITE" id="PS00600">
    <property type="entry name" value="AA_TRANSFER_CLASS_3"/>
    <property type="match status" value="1"/>
</dbReference>
<sequence length="432" mass="46030">MDHSMSKKLHDEALLHIVGGVNSPSRSNKGVGGGIPVTMERASGAYFYDVDGNKYIDYLAAFGPIITGHAHPHITEAITKAAQNGVLYGTPTKHEITFAKMLKEAIPSLEKVRFTNSGTEAVMTTIRVARAYTGRDKIIKFAGCYHGHFDLVLVEAGSGPSTLGIPDSAGVTKSTAEEVITVPFNDLASFKEALAVWSDQVAAVLVEPIVGNFGMVAPEDGFLEAVNELAHANGSLVIYDEVITAFRFMYGGAQNYLGVIPDLTAMGKIIGGGLPIGAYGGRIDIMEKVAPLGPAYQAGTHAGNPASILSGIACLEVLQEEGLYERFEKYGSMLKDGIEKAALKHGIAVTVNQIVGALTVYFTEDPVTNYAEAGATNGELFGRFFKGMLEEGINLAPSKYEAWFITSAHSEADILETIQAVDTVFGKMVQDN</sequence>